<comment type="subcellular location">
    <subcellularLocation>
        <location evidence="2">Membrane</location>
        <topology evidence="2">Multi-pass membrane protein</topology>
    </subcellularLocation>
</comment>
<comment type="similarity">
    <text evidence="2">Belongs to the major facilitator superfamily. MFSD6 family.</text>
</comment>
<name>MFD6B_DANRE</name>
<organism>
    <name type="scientific">Danio rerio</name>
    <name type="common">Zebrafish</name>
    <name type="synonym">Brachydanio rerio</name>
    <dbReference type="NCBI Taxonomy" id="7955"/>
    <lineage>
        <taxon>Eukaryota</taxon>
        <taxon>Metazoa</taxon>
        <taxon>Chordata</taxon>
        <taxon>Craniata</taxon>
        <taxon>Vertebrata</taxon>
        <taxon>Euteleostomi</taxon>
        <taxon>Actinopterygii</taxon>
        <taxon>Neopterygii</taxon>
        <taxon>Teleostei</taxon>
        <taxon>Ostariophysi</taxon>
        <taxon>Cypriniformes</taxon>
        <taxon>Danionidae</taxon>
        <taxon>Danioninae</taxon>
        <taxon>Danio</taxon>
    </lineage>
</organism>
<accession>B0UYT5</accession>
<keyword id="KW-0472">Membrane</keyword>
<keyword id="KW-1185">Reference proteome</keyword>
<keyword id="KW-0812">Transmembrane</keyword>
<keyword id="KW-1133">Transmembrane helix</keyword>
<sequence length="747" mass="82602">MLCSNRQSSLDFQDLLFFLLLCIWLFTPLASCVLQAAGNDTYPKWPTRWDPLFYRVLQCSAPFWGFVADRFKKGKAVLLFSVLCWVVFNCGIGFVKPAAMSCVSVDPTVQSPVNFTNYTHAGNHTRQRRYLTEDAYANPPLSQPILAAYRPHSRYIRSANTNTTSAPFRNSTVDISMASNLTTMSPSATKVPLKSTSTMETQAITAKVKQYIIIFNKEQVDTIFLLILLVIIIGEFFSAPAVTIVDTVTLQYLGQNRDRYGLQRMWGSLGWGIAMLSVGIWIDNTHITIFIQGLGCVLPDYKNYQIAFIVFGVLMTSALIVATQFHFDNRAYQSDEEEDKKEDVEIPQVIQEVSSPESSSDDAPVCPETNPQHFPFKDLFRIICGVRYGTVLFVAWFMGFGYGFVFTFLFWHLEDLKGTTTLFGICSVLSHISELAAYFISHKLIELVGHIRVLYIGLACNTARYLYISYLENAWIVLPMEVLQGLTHASVWAACISYLSAAVPPALRTSAQGILQGLHLGLGRGCGAMLGGVFVNFFGAAETFRGLGMASLVTLLIFSLIQWLLGQNEEKKGAMLAENIPVPSSPVPIATIDLVQNQSTSQPNSDSKSRKTRHQEEQEDPNKPAWVVSASPWVTIAFALYQIRDMVAQTKNNDCQGQQERSEQQTSAAPPGDESTSSQPNASSSPVEYAFQGPASSAFVPQNTHPVRPVAEPPSSTEAKEPVENSTPLPGHSKPLPAITQTQPTTH</sequence>
<protein>
    <recommendedName>
        <fullName evidence="1">Major facilitator superfamily domain-containing protein 6-B</fullName>
    </recommendedName>
    <alternativeName>
        <fullName evidence="1">Macrophage MHC class I receptor 2 homolog B</fullName>
    </alternativeName>
</protein>
<dbReference type="EMBL" id="CR735121">
    <property type="protein sequence ID" value="CAQ14052.1"/>
    <property type="molecule type" value="Genomic_DNA"/>
</dbReference>
<dbReference type="FunCoup" id="B0UYT5">
    <property type="interactions" value="41"/>
</dbReference>
<dbReference type="STRING" id="7955.ENSDARP00000120762"/>
<dbReference type="PaxDb" id="7955-ENSDARP00000120762"/>
<dbReference type="Ensembl" id="ENSDART00000135821">
    <property type="protein sequence ID" value="ENSDARP00000120762"/>
    <property type="gene ID" value="ENSDARG00000054583"/>
</dbReference>
<dbReference type="AGR" id="ZFIN:ZDB-GENE-040912-84"/>
<dbReference type="ZFIN" id="ZDB-GENE-040912-84">
    <property type="gene designation" value="mfsd6b"/>
</dbReference>
<dbReference type="eggNOG" id="KOG3762">
    <property type="taxonomic scope" value="Eukaryota"/>
</dbReference>
<dbReference type="HOGENOM" id="CLU_013133_2_0_1"/>
<dbReference type="InParanoid" id="B0UYT5"/>
<dbReference type="OMA" id="WIDNTHI"/>
<dbReference type="PhylomeDB" id="B0UYT5"/>
<dbReference type="TreeFam" id="TF314366"/>
<dbReference type="PRO" id="PR:B0UYT5"/>
<dbReference type="Proteomes" id="UP000000437">
    <property type="component" value="Unplaced"/>
</dbReference>
<dbReference type="Bgee" id="ENSDARG00000054583">
    <property type="expression patterns" value="Expressed in caudal fin and 26 other cell types or tissues"/>
</dbReference>
<dbReference type="GO" id="GO:0005886">
    <property type="term" value="C:plasma membrane"/>
    <property type="evidence" value="ECO:0000318"/>
    <property type="project" value="GO_Central"/>
</dbReference>
<dbReference type="GO" id="GO:0042590">
    <property type="term" value="P:antigen processing and presentation of exogenous peptide antigen via MHC class I"/>
    <property type="evidence" value="ECO:0000318"/>
    <property type="project" value="GO_Central"/>
</dbReference>
<dbReference type="CDD" id="cd17335">
    <property type="entry name" value="MFS_MFSD6"/>
    <property type="match status" value="1"/>
</dbReference>
<dbReference type="Gene3D" id="1.20.1250.20">
    <property type="entry name" value="MFS general substrate transporter like domains"/>
    <property type="match status" value="2"/>
</dbReference>
<dbReference type="InterPro" id="IPR024989">
    <property type="entry name" value="MFS_assoc_dom"/>
</dbReference>
<dbReference type="InterPro" id="IPR051717">
    <property type="entry name" value="MFS_MFSD6"/>
</dbReference>
<dbReference type="InterPro" id="IPR036259">
    <property type="entry name" value="MFS_trans_sf"/>
</dbReference>
<dbReference type="PANTHER" id="PTHR16172:SF2">
    <property type="entry name" value="MAJOR FACILITATOR SUPERFAMILY DOMAIN-CONTAINING PROTEIN 6"/>
    <property type="match status" value="1"/>
</dbReference>
<dbReference type="PANTHER" id="PTHR16172">
    <property type="entry name" value="MAJOR FACILITATOR SUPERFAMILY DOMAIN-CONTAINING PROTEIN 6-LIKE"/>
    <property type="match status" value="1"/>
</dbReference>
<dbReference type="Pfam" id="PF12832">
    <property type="entry name" value="MFS_1_like"/>
    <property type="match status" value="1"/>
</dbReference>
<dbReference type="SUPFAM" id="SSF103473">
    <property type="entry name" value="MFS general substrate transporter"/>
    <property type="match status" value="1"/>
</dbReference>
<feature type="chain" id="PRO_0000397912" description="Major facilitator superfamily domain-containing protein 6-B">
    <location>
        <begin position="1"/>
        <end position="747"/>
    </location>
</feature>
<feature type="transmembrane region" description="Helical" evidence="2">
    <location>
        <begin position="15"/>
        <end position="35"/>
    </location>
</feature>
<feature type="transmembrane region" description="Helical" evidence="2">
    <location>
        <begin position="75"/>
        <end position="95"/>
    </location>
</feature>
<feature type="transmembrane region" description="Helical" evidence="2">
    <location>
        <begin position="222"/>
        <end position="242"/>
    </location>
</feature>
<feature type="transmembrane region" description="Helical" evidence="2">
    <location>
        <begin position="271"/>
        <end position="291"/>
    </location>
</feature>
<feature type="transmembrane region" description="Helical" evidence="2">
    <location>
        <begin position="306"/>
        <end position="326"/>
    </location>
</feature>
<feature type="transmembrane region" description="Helical" evidence="2">
    <location>
        <begin position="391"/>
        <end position="411"/>
    </location>
</feature>
<feature type="transmembrane region" description="Helical" evidence="2">
    <location>
        <begin position="420"/>
        <end position="440"/>
    </location>
</feature>
<feature type="transmembrane region" description="Helical" evidence="2">
    <location>
        <begin position="453"/>
        <end position="470"/>
    </location>
</feature>
<feature type="transmembrane region" description="Helical" evidence="2">
    <location>
        <begin position="485"/>
        <end position="507"/>
    </location>
</feature>
<feature type="transmembrane region" description="Helical" evidence="2">
    <location>
        <begin position="520"/>
        <end position="540"/>
    </location>
</feature>
<feature type="transmembrane region" description="Helical" evidence="2">
    <location>
        <begin position="546"/>
        <end position="566"/>
    </location>
</feature>
<feature type="region of interest" description="Disordered" evidence="3">
    <location>
        <begin position="597"/>
        <end position="625"/>
    </location>
</feature>
<feature type="region of interest" description="Disordered" evidence="3">
    <location>
        <begin position="652"/>
        <end position="747"/>
    </location>
</feature>
<feature type="compositionally biased region" description="Polar residues" evidence="3">
    <location>
        <begin position="597"/>
        <end position="606"/>
    </location>
</feature>
<feature type="compositionally biased region" description="Polar residues" evidence="3">
    <location>
        <begin position="652"/>
        <end position="668"/>
    </location>
</feature>
<feature type="compositionally biased region" description="Low complexity" evidence="3">
    <location>
        <begin position="675"/>
        <end position="685"/>
    </location>
</feature>
<evidence type="ECO:0000250" key="1">
    <source>
        <dbReference type="UniProtKB" id="Q6ZSS7"/>
    </source>
</evidence>
<evidence type="ECO:0000255" key="2"/>
<evidence type="ECO:0000256" key="3">
    <source>
        <dbReference type="SAM" id="MobiDB-lite"/>
    </source>
</evidence>
<reference key="1">
    <citation type="journal article" date="2013" name="Nature">
        <title>The zebrafish reference genome sequence and its relationship to the human genome.</title>
        <authorList>
            <person name="Howe K."/>
            <person name="Clark M.D."/>
            <person name="Torroja C.F."/>
            <person name="Torrance J."/>
            <person name="Berthelot C."/>
            <person name="Muffato M."/>
            <person name="Collins J.E."/>
            <person name="Humphray S."/>
            <person name="McLaren K."/>
            <person name="Matthews L."/>
            <person name="McLaren S."/>
            <person name="Sealy I."/>
            <person name="Caccamo M."/>
            <person name="Churcher C."/>
            <person name="Scott C."/>
            <person name="Barrett J.C."/>
            <person name="Koch R."/>
            <person name="Rauch G.J."/>
            <person name="White S."/>
            <person name="Chow W."/>
            <person name="Kilian B."/>
            <person name="Quintais L.T."/>
            <person name="Guerra-Assuncao J.A."/>
            <person name="Zhou Y."/>
            <person name="Gu Y."/>
            <person name="Yen J."/>
            <person name="Vogel J.H."/>
            <person name="Eyre T."/>
            <person name="Redmond S."/>
            <person name="Banerjee R."/>
            <person name="Chi J."/>
            <person name="Fu B."/>
            <person name="Langley E."/>
            <person name="Maguire S.F."/>
            <person name="Laird G.K."/>
            <person name="Lloyd D."/>
            <person name="Kenyon E."/>
            <person name="Donaldson S."/>
            <person name="Sehra H."/>
            <person name="Almeida-King J."/>
            <person name="Loveland J."/>
            <person name="Trevanion S."/>
            <person name="Jones M."/>
            <person name="Quail M."/>
            <person name="Willey D."/>
            <person name="Hunt A."/>
            <person name="Burton J."/>
            <person name="Sims S."/>
            <person name="McLay K."/>
            <person name="Plumb B."/>
            <person name="Davis J."/>
            <person name="Clee C."/>
            <person name="Oliver K."/>
            <person name="Clark R."/>
            <person name="Riddle C."/>
            <person name="Elliot D."/>
            <person name="Threadgold G."/>
            <person name="Harden G."/>
            <person name="Ware D."/>
            <person name="Begum S."/>
            <person name="Mortimore B."/>
            <person name="Kerry G."/>
            <person name="Heath P."/>
            <person name="Phillimore B."/>
            <person name="Tracey A."/>
            <person name="Corby N."/>
            <person name="Dunn M."/>
            <person name="Johnson C."/>
            <person name="Wood J."/>
            <person name="Clark S."/>
            <person name="Pelan S."/>
            <person name="Griffiths G."/>
            <person name="Smith M."/>
            <person name="Glithero R."/>
            <person name="Howden P."/>
            <person name="Barker N."/>
            <person name="Lloyd C."/>
            <person name="Stevens C."/>
            <person name="Harley J."/>
            <person name="Holt K."/>
            <person name="Panagiotidis G."/>
            <person name="Lovell J."/>
            <person name="Beasley H."/>
            <person name="Henderson C."/>
            <person name="Gordon D."/>
            <person name="Auger K."/>
            <person name="Wright D."/>
            <person name="Collins J."/>
            <person name="Raisen C."/>
            <person name="Dyer L."/>
            <person name="Leung K."/>
            <person name="Robertson L."/>
            <person name="Ambridge K."/>
            <person name="Leongamornlert D."/>
            <person name="McGuire S."/>
            <person name="Gilderthorp R."/>
            <person name="Griffiths C."/>
            <person name="Manthravadi D."/>
            <person name="Nichol S."/>
            <person name="Barker G."/>
            <person name="Whitehead S."/>
            <person name="Kay M."/>
            <person name="Brown J."/>
            <person name="Murnane C."/>
            <person name="Gray E."/>
            <person name="Humphries M."/>
            <person name="Sycamore N."/>
            <person name="Barker D."/>
            <person name="Saunders D."/>
            <person name="Wallis J."/>
            <person name="Babbage A."/>
            <person name="Hammond S."/>
            <person name="Mashreghi-Mohammadi M."/>
            <person name="Barr L."/>
            <person name="Martin S."/>
            <person name="Wray P."/>
            <person name="Ellington A."/>
            <person name="Matthews N."/>
            <person name="Ellwood M."/>
            <person name="Woodmansey R."/>
            <person name="Clark G."/>
            <person name="Cooper J."/>
            <person name="Tromans A."/>
            <person name="Grafham D."/>
            <person name="Skuce C."/>
            <person name="Pandian R."/>
            <person name="Andrews R."/>
            <person name="Harrison E."/>
            <person name="Kimberley A."/>
            <person name="Garnett J."/>
            <person name="Fosker N."/>
            <person name="Hall R."/>
            <person name="Garner P."/>
            <person name="Kelly D."/>
            <person name="Bird C."/>
            <person name="Palmer S."/>
            <person name="Gehring I."/>
            <person name="Berger A."/>
            <person name="Dooley C.M."/>
            <person name="Ersan-Urun Z."/>
            <person name="Eser C."/>
            <person name="Geiger H."/>
            <person name="Geisler M."/>
            <person name="Karotki L."/>
            <person name="Kirn A."/>
            <person name="Konantz J."/>
            <person name="Konantz M."/>
            <person name="Oberlander M."/>
            <person name="Rudolph-Geiger S."/>
            <person name="Teucke M."/>
            <person name="Lanz C."/>
            <person name="Raddatz G."/>
            <person name="Osoegawa K."/>
            <person name="Zhu B."/>
            <person name="Rapp A."/>
            <person name="Widaa S."/>
            <person name="Langford C."/>
            <person name="Yang F."/>
            <person name="Schuster S.C."/>
            <person name="Carter N.P."/>
            <person name="Harrow J."/>
            <person name="Ning Z."/>
            <person name="Herrero J."/>
            <person name="Searle S.M."/>
            <person name="Enright A."/>
            <person name="Geisler R."/>
            <person name="Plasterk R.H."/>
            <person name="Lee C."/>
            <person name="Westerfield M."/>
            <person name="de Jong P.J."/>
            <person name="Zon L.I."/>
            <person name="Postlethwait J.H."/>
            <person name="Nusslein-Volhard C."/>
            <person name="Hubbard T.J."/>
            <person name="Roest Crollius H."/>
            <person name="Rogers J."/>
            <person name="Stemple D.L."/>
        </authorList>
    </citation>
    <scope>NUCLEOTIDE SEQUENCE [LARGE SCALE GENOMIC DNA]</scope>
    <source>
        <strain>Tuebingen</strain>
    </source>
</reference>
<gene>
    <name type="primary">mfsd6b</name>
    <name type="ORF">si:dkey-42h23.5</name>
    <name type="ORF">zgc:92925</name>
</gene>
<proteinExistence type="inferred from homology"/>